<feature type="chain" id="PRO_0000159763" description="DNA-directed RNA polymerase subunit Rpo12">
    <location>
        <begin position="1"/>
        <end position="49"/>
    </location>
</feature>
<feature type="binding site" evidence="1">
    <location>
        <position position="11"/>
    </location>
    <ligand>
        <name>Zn(2+)</name>
        <dbReference type="ChEBI" id="CHEBI:29105"/>
    </ligand>
</feature>
<feature type="binding site" evidence="1">
    <location>
        <position position="27"/>
    </location>
    <ligand>
        <name>Zn(2+)</name>
        <dbReference type="ChEBI" id="CHEBI:29105"/>
    </ligand>
</feature>
<feature type="binding site" evidence="1">
    <location>
        <position position="30"/>
    </location>
    <ligand>
        <name>Zn(2+)</name>
        <dbReference type="ChEBI" id="CHEBI:29105"/>
    </ligand>
</feature>
<feature type="strand" evidence="2">
    <location>
        <begin position="5"/>
        <end position="11"/>
    </location>
</feature>
<feature type="strand" evidence="2">
    <location>
        <begin position="14"/>
        <end position="16"/>
    </location>
</feature>
<feature type="strand" evidence="2">
    <location>
        <begin position="19"/>
        <end position="21"/>
    </location>
</feature>
<feature type="turn" evidence="2">
    <location>
        <begin position="28"/>
        <end position="30"/>
    </location>
</feature>
<feature type="strand" evidence="2">
    <location>
        <begin position="33"/>
        <end position="36"/>
    </location>
</feature>
<feature type="strand" evidence="2">
    <location>
        <begin position="44"/>
        <end position="47"/>
    </location>
</feature>
<comment type="function">
    <text evidence="1">DNA-dependent RNA polymerase (RNAP) catalyzes the transcription of DNA into RNA using the four ribonucleoside triphosphates as substrates.</text>
</comment>
<comment type="catalytic activity">
    <reaction evidence="1">
        <text>RNA(n) + a ribonucleoside 5'-triphosphate = RNA(n+1) + diphosphate</text>
        <dbReference type="Rhea" id="RHEA:21248"/>
        <dbReference type="Rhea" id="RHEA-COMP:14527"/>
        <dbReference type="Rhea" id="RHEA-COMP:17342"/>
        <dbReference type="ChEBI" id="CHEBI:33019"/>
        <dbReference type="ChEBI" id="CHEBI:61557"/>
        <dbReference type="ChEBI" id="CHEBI:140395"/>
        <dbReference type="EC" id="2.7.7.6"/>
    </reaction>
</comment>
<comment type="cofactor">
    <cofactor evidence="1">
        <name>Zn(2+)</name>
        <dbReference type="ChEBI" id="CHEBI:29105"/>
    </cofactor>
    <text evidence="1">Binds 1 zinc ion.</text>
</comment>
<comment type="subunit">
    <text evidence="1">Part of the RNA polymerase complex.</text>
</comment>
<comment type="subcellular location">
    <subcellularLocation>
        <location evidence="1">Cytoplasm</location>
    </subcellularLocation>
</comment>
<comment type="similarity">
    <text evidence="1">Belongs to the archaeal Rpo12/eukaryotic RPC10 RNA polymerase subunit family.</text>
</comment>
<reference key="1">
    <citation type="journal article" date="1999" name="Genetics">
        <title>Divergence of the hyperthermophilic archaea Pyrococcus furiosus and P. horikoshii inferred from complete genomic sequences.</title>
        <authorList>
            <person name="Maeder D.L."/>
            <person name="Weiss R.B."/>
            <person name="Dunn D.M."/>
            <person name="Cherry J.L."/>
            <person name="Gonzalez J.M."/>
            <person name="DiRuggiero J."/>
            <person name="Robb F.T."/>
        </authorList>
    </citation>
    <scope>NUCLEOTIDE SEQUENCE [LARGE SCALE GENOMIC DNA]</scope>
    <source>
        <strain>ATCC 43587 / DSM 3638 / JCM 8422 / Vc1</strain>
    </source>
</reference>
<organism>
    <name type="scientific">Pyrococcus furiosus (strain ATCC 43587 / DSM 3638 / JCM 8422 / Vc1)</name>
    <dbReference type="NCBI Taxonomy" id="186497"/>
    <lineage>
        <taxon>Archaea</taxon>
        <taxon>Methanobacteriati</taxon>
        <taxon>Methanobacteriota</taxon>
        <taxon>Thermococci</taxon>
        <taxon>Thermococcales</taxon>
        <taxon>Thermococcaceae</taxon>
        <taxon>Pyrococcus</taxon>
    </lineage>
</organism>
<sequence>MVEAVYRCFKCGREVKLDLSITRDLRCPYCGSKILYKPRPKVPRRVKAI</sequence>
<accession>Q8TZI3</accession>
<proteinExistence type="evidence at protein level"/>
<dbReference type="EC" id="2.7.7.6" evidence="1"/>
<dbReference type="EMBL" id="AE009950">
    <property type="protein sequence ID" value="AAL82133.1"/>
    <property type="molecule type" value="Genomic_DNA"/>
</dbReference>
<dbReference type="RefSeq" id="WP_011013154.1">
    <property type="nucleotide sequence ID" value="NZ_CP023154.1"/>
</dbReference>
<dbReference type="PDB" id="8CRO">
    <property type="method" value="EM"/>
    <property type="resolution" value="3.10 A"/>
    <property type="chains" value="P=1-49"/>
</dbReference>
<dbReference type="PDB" id="8OKI">
    <property type="method" value="EM"/>
    <property type="resolution" value="3.45 A"/>
    <property type="chains" value="P=1-49"/>
</dbReference>
<dbReference type="PDB" id="8ORQ">
    <property type="method" value="EM"/>
    <property type="resolution" value="3.20 A"/>
    <property type="chains" value="P=1-49"/>
</dbReference>
<dbReference type="PDB" id="8P2I">
    <property type="method" value="EM"/>
    <property type="resolution" value="3.40 A"/>
    <property type="chains" value="P=1-49"/>
</dbReference>
<dbReference type="PDB" id="8RBO">
    <property type="method" value="EM"/>
    <property type="resolution" value="3.02 A"/>
    <property type="chains" value="P=1-49"/>
</dbReference>
<dbReference type="PDBsum" id="8CRO"/>
<dbReference type="PDBsum" id="8OKI"/>
<dbReference type="PDBsum" id="8ORQ"/>
<dbReference type="PDBsum" id="8P2I"/>
<dbReference type="PDBsum" id="8RBO"/>
<dbReference type="EMDB" id="EMD-16809"/>
<dbReference type="EMDB" id="EMD-16929"/>
<dbReference type="EMDB" id="EMD-17130"/>
<dbReference type="EMDB" id="EMD-17366"/>
<dbReference type="EMDB" id="EMD-19033"/>
<dbReference type="SMR" id="Q8TZI3"/>
<dbReference type="IntAct" id="Q8TZI3">
    <property type="interactions" value="1"/>
</dbReference>
<dbReference type="MINT" id="Q8TZI3"/>
<dbReference type="STRING" id="186497.PF2009"/>
<dbReference type="PaxDb" id="186497-PF2009"/>
<dbReference type="KEGG" id="pfu:PF2009"/>
<dbReference type="PATRIC" id="fig|186497.12.peg.2086"/>
<dbReference type="eggNOG" id="arCOG04341">
    <property type="taxonomic scope" value="Archaea"/>
</dbReference>
<dbReference type="HOGENOM" id="CLU_179456_2_1_2"/>
<dbReference type="OrthoDB" id="129238at2157"/>
<dbReference type="PhylomeDB" id="Q8TZI3"/>
<dbReference type="Proteomes" id="UP000001013">
    <property type="component" value="Chromosome"/>
</dbReference>
<dbReference type="GO" id="GO:0005737">
    <property type="term" value="C:cytoplasm"/>
    <property type="evidence" value="ECO:0007669"/>
    <property type="project" value="UniProtKB-SubCell"/>
</dbReference>
<dbReference type="GO" id="GO:0000428">
    <property type="term" value="C:DNA-directed RNA polymerase complex"/>
    <property type="evidence" value="ECO:0007669"/>
    <property type="project" value="UniProtKB-KW"/>
</dbReference>
<dbReference type="GO" id="GO:0003677">
    <property type="term" value="F:DNA binding"/>
    <property type="evidence" value="ECO:0007669"/>
    <property type="project" value="InterPro"/>
</dbReference>
<dbReference type="GO" id="GO:0003899">
    <property type="term" value="F:DNA-directed RNA polymerase activity"/>
    <property type="evidence" value="ECO:0007669"/>
    <property type="project" value="UniProtKB-UniRule"/>
</dbReference>
<dbReference type="GO" id="GO:0008270">
    <property type="term" value="F:zinc ion binding"/>
    <property type="evidence" value="ECO:0007669"/>
    <property type="project" value="UniProtKB-UniRule"/>
</dbReference>
<dbReference type="GO" id="GO:0006351">
    <property type="term" value="P:DNA-templated transcription"/>
    <property type="evidence" value="ECO:0007669"/>
    <property type="project" value="UniProtKB-UniRule"/>
</dbReference>
<dbReference type="Gene3D" id="2.20.28.30">
    <property type="entry name" value="RNA polymerase ii, chain L"/>
    <property type="match status" value="1"/>
</dbReference>
<dbReference type="HAMAP" id="MF_00615">
    <property type="entry name" value="RNApol_arch_Rpo12"/>
    <property type="match status" value="1"/>
</dbReference>
<dbReference type="InterPro" id="IPR006591">
    <property type="entry name" value="RNAP_P/RPABC4"/>
</dbReference>
<dbReference type="InterPro" id="IPR029040">
    <property type="entry name" value="RPABC4/Spt4"/>
</dbReference>
<dbReference type="InterPro" id="IPR023464">
    <property type="entry name" value="Rpo12"/>
</dbReference>
<dbReference type="NCBIfam" id="NF001607">
    <property type="entry name" value="PRK00398.1-4"/>
    <property type="match status" value="1"/>
</dbReference>
<dbReference type="Pfam" id="PF03604">
    <property type="entry name" value="Zn_ribbon_RPAB4"/>
    <property type="match status" value="1"/>
</dbReference>
<dbReference type="SMART" id="SM00659">
    <property type="entry name" value="RPOLCX"/>
    <property type="match status" value="1"/>
</dbReference>
<dbReference type="SUPFAM" id="SSF63393">
    <property type="entry name" value="RNA polymerase subunits"/>
    <property type="match status" value="1"/>
</dbReference>
<name>RPO12_PYRFU</name>
<keyword id="KW-0002">3D-structure</keyword>
<keyword id="KW-0963">Cytoplasm</keyword>
<keyword id="KW-0240">DNA-directed RNA polymerase</keyword>
<keyword id="KW-0479">Metal-binding</keyword>
<keyword id="KW-0548">Nucleotidyltransferase</keyword>
<keyword id="KW-1185">Reference proteome</keyword>
<keyword id="KW-0804">Transcription</keyword>
<keyword id="KW-0808">Transferase</keyword>
<keyword id="KW-0862">Zinc</keyword>
<gene>
    <name evidence="1" type="primary">rpo12</name>
    <name evidence="1" type="synonym">rpoP</name>
    <name type="ordered locus">PF2009</name>
</gene>
<evidence type="ECO:0000255" key="1">
    <source>
        <dbReference type="HAMAP-Rule" id="MF_00615"/>
    </source>
</evidence>
<evidence type="ECO:0007829" key="2">
    <source>
        <dbReference type="PDB" id="8RBO"/>
    </source>
</evidence>
<protein>
    <recommendedName>
        <fullName evidence="1">DNA-directed RNA polymerase subunit Rpo12</fullName>
        <ecNumber evidence="1">2.7.7.6</ecNumber>
    </recommendedName>
    <alternativeName>
        <fullName evidence="1">DNA-directed RNA polymerase subunit P</fullName>
    </alternativeName>
</protein>